<dbReference type="EC" id="1.11.1.21" evidence="1"/>
<dbReference type="EMBL" id="CP000627">
    <property type="protein sequence ID" value="ABQ20629.1"/>
    <property type="molecule type" value="Genomic_DNA"/>
</dbReference>
<dbReference type="EMBL" id="CP001235">
    <property type="protein sequence ID" value="ACP09682.1"/>
    <property type="molecule type" value="Genomic_DNA"/>
</dbReference>
<dbReference type="RefSeq" id="WP_000400806.1">
    <property type="nucleotide sequence ID" value="NZ_JAACZH010000009.1"/>
</dbReference>
<dbReference type="SMR" id="A5F7X7"/>
<dbReference type="KEGG" id="vco:VC0395_A1166"/>
<dbReference type="KEGG" id="vcr:VC395_1677"/>
<dbReference type="PATRIC" id="fig|345073.21.peg.1624"/>
<dbReference type="eggNOG" id="COG0376">
    <property type="taxonomic scope" value="Bacteria"/>
</dbReference>
<dbReference type="HOGENOM" id="CLU_025424_2_0_6"/>
<dbReference type="OrthoDB" id="9759743at2"/>
<dbReference type="Proteomes" id="UP000000249">
    <property type="component" value="Chromosome 2"/>
</dbReference>
<dbReference type="GO" id="GO:0005829">
    <property type="term" value="C:cytosol"/>
    <property type="evidence" value="ECO:0007669"/>
    <property type="project" value="TreeGrafter"/>
</dbReference>
<dbReference type="GO" id="GO:0004096">
    <property type="term" value="F:catalase activity"/>
    <property type="evidence" value="ECO:0007669"/>
    <property type="project" value="UniProtKB-UniRule"/>
</dbReference>
<dbReference type="GO" id="GO:0020037">
    <property type="term" value="F:heme binding"/>
    <property type="evidence" value="ECO:0007669"/>
    <property type="project" value="InterPro"/>
</dbReference>
<dbReference type="GO" id="GO:0046872">
    <property type="term" value="F:metal ion binding"/>
    <property type="evidence" value="ECO:0007669"/>
    <property type="project" value="UniProtKB-KW"/>
</dbReference>
<dbReference type="GO" id="GO:0070301">
    <property type="term" value="P:cellular response to hydrogen peroxide"/>
    <property type="evidence" value="ECO:0007669"/>
    <property type="project" value="TreeGrafter"/>
</dbReference>
<dbReference type="GO" id="GO:0042744">
    <property type="term" value="P:hydrogen peroxide catabolic process"/>
    <property type="evidence" value="ECO:0007669"/>
    <property type="project" value="UniProtKB-KW"/>
</dbReference>
<dbReference type="CDD" id="cd00649">
    <property type="entry name" value="catalase_peroxidase_1"/>
    <property type="match status" value="1"/>
</dbReference>
<dbReference type="CDD" id="cd08200">
    <property type="entry name" value="catalase_peroxidase_2"/>
    <property type="match status" value="1"/>
</dbReference>
<dbReference type="FunFam" id="1.10.420.10:FF:000002">
    <property type="entry name" value="Catalase-peroxidase"/>
    <property type="match status" value="1"/>
</dbReference>
<dbReference type="FunFam" id="1.10.420.10:FF:000004">
    <property type="entry name" value="Catalase-peroxidase"/>
    <property type="match status" value="1"/>
</dbReference>
<dbReference type="FunFam" id="1.10.520.10:FF:000002">
    <property type="entry name" value="Catalase-peroxidase"/>
    <property type="match status" value="1"/>
</dbReference>
<dbReference type="Gene3D" id="1.10.520.10">
    <property type="match status" value="2"/>
</dbReference>
<dbReference type="Gene3D" id="1.10.420.10">
    <property type="entry name" value="Peroxidase, domain 2"/>
    <property type="match status" value="2"/>
</dbReference>
<dbReference type="HAMAP" id="MF_01961">
    <property type="entry name" value="Catal_peroxid"/>
    <property type="match status" value="1"/>
</dbReference>
<dbReference type="InterPro" id="IPR000763">
    <property type="entry name" value="Catalase_peroxidase"/>
</dbReference>
<dbReference type="InterPro" id="IPR002016">
    <property type="entry name" value="Haem_peroxidase"/>
</dbReference>
<dbReference type="InterPro" id="IPR010255">
    <property type="entry name" value="Haem_peroxidase_sf"/>
</dbReference>
<dbReference type="InterPro" id="IPR019794">
    <property type="entry name" value="Peroxidases_AS"/>
</dbReference>
<dbReference type="NCBIfam" id="TIGR00198">
    <property type="entry name" value="cat_per_HPI"/>
    <property type="match status" value="1"/>
</dbReference>
<dbReference type="NCBIfam" id="NF011635">
    <property type="entry name" value="PRK15061.1"/>
    <property type="match status" value="1"/>
</dbReference>
<dbReference type="PANTHER" id="PTHR30555:SF6">
    <property type="entry name" value="CATALASE-PEROXIDASE"/>
    <property type="match status" value="1"/>
</dbReference>
<dbReference type="PANTHER" id="PTHR30555">
    <property type="entry name" value="HYDROPEROXIDASE I, BIFUNCTIONAL CATALASE-PEROXIDASE"/>
    <property type="match status" value="1"/>
</dbReference>
<dbReference type="Pfam" id="PF00141">
    <property type="entry name" value="peroxidase"/>
    <property type="match status" value="2"/>
</dbReference>
<dbReference type="PRINTS" id="PR00460">
    <property type="entry name" value="BPEROXIDASE"/>
</dbReference>
<dbReference type="PRINTS" id="PR00458">
    <property type="entry name" value="PEROXIDASE"/>
</dbReference>
<dbReference type="SUPFAM" id="SSF48113">
    <property type="entry name" value="Heme-dependent peroxidases"/>
    <property type="match status" value="2"/>
</dbReference>
<dbReference type="PROSITE" id="PS00436">
    <property type="entry name" value="PEROXIDASE_2"/>
    <property type="match status" value="1"/>
</dbReference>
<dbReference type="PROSITE" id="PS50873">
    <property type="entry name" value="PEROXIDASE_4"/>
    <property type="match status" value="1"/>
</dbReference>
<keyword id="KW-0349">Heme</keyword>
<keyword id="KW-0376">Hydrogen peroxide</keyword>
<keyword id="KW-0408">Iron</keyword>
<keyword id="KW-0479">Metal-binding</keyword>
<keyword id="KW-0560">Oxidoreductase</keyword>
<keyword id="KW-0575">Peroxidase</keyword>
<name>KATG_VIBC3</name>
<evidence type="ECO:0000255" key="1">
    <source>
        <dbReference type="HAMAP-Rule" id="MF_01961"/>
    </source>
</evidence>
<feature type="chain" id="PRO_0000354948" description="Catalase-peroxidase">
    <location>
        <begin position="1"/>
        <end position="724"/>
    </location>
</feature>
<feature type="active site" description="Proton acceptor" evidence="1">
    <location>
        <position position="99"/>
    </location>
</feature>
<feature type="binding site" description="axial binding residue" evidence="1">
    <location>
        <position position="267"/>
    </location>
    <ligand>
        <name>heme b</name>
        <dbReference type="ChEBI" id="CHEBI:60344"/>
    </ligand>
    <ligandPart>
        <name>Fe</name>
        <dbReference type="ChEBI" id="CHEBI:18248"/>
    </ligandPart>
</feature>
<feature type="site" description="Transition state stabilizer" evidence="1">
    <location>
        <position position="95"/>
    </location>
</feature>
<feature type="cross-link" description="Tryptophyl-tyrosyl-methioninium (Trp-Tyr) (with M-252)" evidence="1">
    <location>
        <begin position="98"/>
        <end position="226"/>
    </location>
</feature>
<feature type="cross-link" description="Tryptophyl-tyrosyl-methioninium (Tyr-Met) (with W-98)" evidence="1">
    <location>
        <begin position="226"/>
        <end position="252"/>
    </location>
</feature>
<gene>
    <name evidence="1" type="primary">katG</name>
    <name type="synonym">perA</name>
    <name type="ordered locus">VC0395_A1166</name>
    <name type="ordered locus">VC395_1677</name>
</gene>
<organism>
    <name type="scientific">Vibrio cholerae serotype O1 (strain ATCC 39541 / Classical Ogawa 395 / O395)</name>
    <dbReference type="NCBI Taxonomy" id="345073"/>
    <lineage>
        <taxon>Bacteria</taxon>
        <taxon>Pseudomonadati</taxon>
        <taxon>Pseudomonadota</taxon>
        <taxon>Gammaproteobacteria</taxon>
        <taxon>Vibrionales</taxon>
        <taxon>Vibrionaceae</taxon>
        <taxon>Vibrio</taxon>
    </lineage>
</organism>
<reference key="1">
    <citation type="submission" date="2007-03" db="EMBL/GenBank/DDBJ databases">
        <authorList>
            <person name="Heidelberg J."/>
        </authorList>
    </citation>
    <scope>NUCLEOTIDE SEQUENCE [LARGE SCALE GENOMIC DNA]</scope>
    <source>
        <strain>ATCC 39541 / Classical Ogawa 395 / O395</strain>
    </source>
</reference>
<reference key="2">
    <citation type="journal article" date="2008" name="PLoS ONE">
        <title>A recalibrated molecular clock and independent origins for the cholera pandemic clones.</title>
        <authorList>
            <person name="Feng L."/>
            <person name="Reeves P.R."/>
            <person name="Lan R."/>
            <person name="Ren Y."/>
            <person name="Gao C."/>
            <person name="Zhou Z."/>
            <person name="Ren Y."/>
            <person name="Cheng J."/>
            <person name="Wang W."/>
            <person name="Wang J."/>
            <person name="Qian W."/>
            <person name="Li D."/>
            <person name="Wang L."/>
        </authorList>
    </citation>
    <scope>NUCLEOTIDE SEQUENCE [LARGE SCALE GENOMIC DNA]</scope>
    <source>
        <strain>ATCC 39541 / Classical Ogawa 395 / O395</strain>
    </source>
</reference>
<accession>A5F7X7</accession>
<accession>C3M0W6</accession>
<proteinExistence type="inferred from homology"/>
<protein>
    <recommendedName>
        <fullName evidence="1">Catalase-peroxidase</fullName>
        <shortName evidence="1">CP</shortName>
        <ecNumber evidence="1">1.11.1.21</ecNumber>
    </recommendedName>
    <alternativeName>
        <fullName evidence="1">Peroxidase/catalase</fullName>
    </alternativeName>
</protein>
<comment type="function">
    <text evidence="1">Bifunctional enzyme with both catalase and broad-spectrum peroxidase activity.</text>
</comment>
<comment type="catalytic activity">
    <reaction evidence="1">
        <text>H2O2 + AH2 = A + 2 H2O</text>
        <dbReference type="Rhea" id="RHEA:30275"/>
        <dbReference type="ChEBI" id="CHEBI:13193"/>
        <dbReference type="ChEBI" id="CHEBI:15377"/>
        <dbReference type="ChEBI" id="CHEBI:16240"/>
        <dbReference type="ChEBI" id="CHEBI:17499"/>
        <dbReference type="EC" id="1.11.1.21"/>
    </reaction>
</comment>
<comment type="catalytic activity">
    <reaction evidence="1">
        <text>2 H2O2 = O2 + 2 H2O</text>
        <dbReference type="Rhea" id="RHEA:20309"/>
        <dbReference type="ChEBI" id="CHEBI:15377"/>
        <dbReference type="ChEBI" id="CHEBI:15379"/>
        <dbReference type="ChEBI" id="CHEBI:16240"/>
        <dbReference type="EC" id="1.11.1.21"/>
    </reaction>
</comment>
<comment type="cofactor">
    <cofactor evidence="1">
        <name>heme b</name>
        <dbReference type="ChEBI" id="CHEBI:60344"/>
    </cofactor>
    <text evidence="1">Binds 1 heme b (iron(II)-protoporphyrin IX) group per dimer.</text>
</comment>
<comment type="subunit">
    <text evidence="1">Homodimer or homotetramer.</text>
</comment>
<comment type="PTM">
    <text evidence="1">Formation of the three residue Trp-Tyr-Met cross-link is important for the catalase, but not the peroxidase activity of the enzyme.</text>
</comment>
<comment type="similarity">
    <text evidence="1">Belongs to the peroxidase family. Peroxidase/catalase subfamily.</text>
</comment>
<sequence length="724" mass="80681">MEHNKAGSSGQCPVMHGGLTSASMSNMDWWPKALNLDILHQHDSKTNPLGADFNYREELKKLDVEALKRDLKALMTNSQEWWPADWGHYGGLMIRMAWHSAGTYRIADGRGGGGTGNQRFAPLNSWPDNANLDKARRLLWPIKQKYGNKISWADLMILAGNMAYESMGLKTFGFAFGREDIWHPEKDIYWGSEKEWLAKSGGENSRYSGQRDLENPLATVMMGLIYVNPEGVDGNPDPLKTAQDMRVTFARMAMNDEETVALTAGGHTVGKAHGNGKASNLGPDPEGAELHEQGLGWNNHTSRGIGRNTVTSGIEGAWTTHPTRWDNEYFYLLLSYEWQLTKSPAGAWQWEPVNIKEEDKPVDVEDPSIRYNPMMTDADMALKIDPEYRKISERFYKDPAYFSEVFARAWFKLTHRDMGPKARYFGPDVPAEDLIWQDPVPAGRKDYDVNAVKAKIAASGLSISEMVSTAWDSARTFRGSDKRGGANGARIRLAPQKDWEGNEPARLGKVLAVLEKIAAESGISIADTIVLAGNVGIEQAAKAAGVNVTVPFAPGRGDATIEQTDVESFEVLEPLADGFRNWQKKHYVVTPEEMLLDKAQLLRLTAPEMTVLIGGMRVLGTNYGGSQHGVFTDRVGALTNDFFVNLTDMSYTWKPTGRNSYEIVERKSGKVKWTATRVDLVFGSNSILRAYAEVYAQDDNKEKFVKDFVAAWTKVMNADRFDLV</sequence>